<name>SHO1_CRYGW</name>
<evidence type="ECO:0000250" key="1"/>
<evidence type="ECO:0000255" key="2"/>
<evidence type="ECO:0000255" key="3">
    <source>
        <dbReference type="PROSITE-ProRule" id="PRU00192"/>
    </source>
</evidence>
<evidence type="ECO:0000256" key="4">
    <source>
        <dbReference type="SAM" id="MobiDB-lite"/>
    </source>
</evidence>
<evidence type="ECO:0000305" key="5"/>
<reference key="1">
    <citation type="journal article" date="2011" name="MBio">
        <title>Genome variation in Cryptococcus gattii, an emerging pathogen of immunocompetent hosts.</title>
        <authorList>
            <person name="D'Souza C.A."/>
            <person name="Kronstad J.W."/>
            <person name="Taylor G."/>
            <person name="Warren R."/>
            <person name="Yuen M."/>
            <person name="Hu G."/>
            <person name="Jung W.H."/>
            <person name="Sham A."/>
            <person name="Kidd S.E."/>
            <person name="Tangen K."/>
            <person name="Lee N."/>
            <person name="Zeilmaker T."/>
            <person name="Sawkins J."/>
            <person name="McVicker G."/>
            <person name="Shah S."/>
            <person name="Gnerre S."/>
            <person name="Griggs A."/>
            <person name="Zeng Q."/>
            <person name="Bartlett K."/>
            <person name="Li W."/>
            <person name="Wang X."/>
            <person name="Heitman J."/>
            <person name="Stajich J.E."/>
            <person name="Fraser J.A."/>
            <person name="Meyer W."/>
            <person name="Carter D."/>
            <person name="Schein J."/>
            <person name="Krzywinski M."/>
            <person name="Kwon-Chung K.J."/>
            <person name="Varma A."/>
            <person name="Wang J."/>
            <person name="Brunham R."/>
            <person name="Fyfe M."/>
            <person name="Ouellette B.F.F."/>
            <person name="Siddiqui A."/>
            <person name="Marra M."/>
            <person name="Jones S."/>
            <person name="Holt R."/>
            <person name="Birren B.W."/>
            <person name="Galagan J.E."/>
            <person name="Cuomo C.A."/>
        </authorList>
    </citation>
    <scope>NUCLEOTIDE SEQUENCE [LARGE SCALE GENOMIC DNA]</scope>
    <source>
        <strain>WM276 / ATCC MYA-4071</strain>
    </source>
</reference>
<protein>
    <recommendedName>
        <fullName>High osmolarity signaling protein SHO1</fullName>
    </recommendedName>
    <alternativeName>
        <fullName>Osmosensor SHO1</fullName>
    </alternativeName>
</protein>
<comment type="function">
    <text evidence="1">Plasma membrane osmosensor that activates the high osmolarity glycerol (HOG) MAPK signaling pathway in response to high osmolarity.</text>
</comment>
<comment type="subunit">
    <text evidence="1">Forms homooligomers.</text>
</comment>
<comment type="subcellular location">
    <subcellularLocation>
        <location evidence="1">Cell membrane</location>
        <topology evidence="1">Multi-pass membrane protein</topology>
    </subcellularLocation>
</comment>
<comment type="similarity">
    <text evidence="5">Belongs to the SHO1 family.</text>
</comment>
<dbReference type="EMBL" id="CP000297">
    <property type="protein sequence ID" value="ADV25202.1"/>
    <property type="molecule type" value="Genomic_DNA"/>
</dbReference>
<dbReference type="RefSeq" id="XP_003196989.1">
    <property type="nucleotide sequence ID" value="XM_003196941.1"/>
</dbReference>
<dbReference type="SMR" id="E6RET3"/>
<dbReference type="GeneID" id="10185509"/>
<dbReference type="KEGG" id="cgi:CGB_L1550C"/>
<dbReference type="VEuPathDB" id="FungiDB:CGB_L1550C"/>
<dbReference type="eggNOG" id="ENOG502QW7A">
    <property type="taxonomic scope" value="Eukaryota"/>
</dbReference>
<dbReference type="HOGENOM" id="CLU_043316_0_0_1"/>
<dbReference type="OrthoDB" id="5983572at2759"/>
<dbReference type="Proteomes" id="UP000007805">
    <property type="component" value="Chromosome L"/>
</dbReference>
<dbReference type="GO" id="GO:0005886">
    <property type="term" value="C:plasma membrane"/>
    <property type="evidence" value="ECO:0007669"/>
    <property type="project" value="UniProtKB-SubCell"/>
</dbReference>
<dbReference type="CDD" id="cd11855">
    <property type="entry name" value="SH3_Sho1p"/>
    <property type="match status" value="1"/>
</dbReference>
<dbReference type="Gene3D" id="2.30.30.40">
    <property type="entry name" value="SH3 Domains"/>
    <property type="match status" value="1"/>
</dbReference>
<dbReference type="InterPro" id="IPR036028">
    <property type="entry name" value="SH3-like_dom_sf"/>
</dbReference>
<dbReference type="InterPro" id="IPR001452">
    <property type="entry name" value="SH3_domain"/>
</dbReference>
<dbReference type="InterPro" id="IPR035522">
    <property type="entry name" value="Sho1_SH3"/>
</dbReference>
<dbReference type="Pfam" id="PF00018">
    <property type="entry name" value="SH3_1"/>
    <property type="match status" value="1"/>
</dbReference>
<dbReference type="PRINTS" id="PR00452">
    <property type="entry name" value="SH3DOMAIN"/>
</dbReference>
<dbReference type="SMART" id="SM00326">
    <property type="entry name" value="SH3"/>
    <property type="match status" value="1"/>
</dbReference>
<dbReference type="SUPFAM" id="SSF50044">
    <property type="entry name" value="SH3-domain"/>
    <property type="match status" value="1"/>
</dbReference>
<dbReference type="PROSITE" id="PS50002">
    <property type="entry name" value="SH3"/>
    <property type="match status" value="1"/>
</dbReference>
<proteinExistence type="inferred from homology"/>
<keyword id="KW-1003">Cell membrane</keyword>
<keyword id="KW-0472">Membrane</keyword>
<keyword id="KW-0728">SH3 domain</keyword>
<keyword id="KW-0346">Stress response</keyword>
<keyword id="KW-0812">Transmembrane</keyword>
<keyword id="KW-1133">Transmembrane helix</keyword>
<organism>
    <name type="scientific">Cryptococcus gattii serotype B (strain WM276 / ATCC MYA-4071)</name>
    <name type="common">Filobasidiella gattii</name>
    <name type="synonym">Cryptococcus bacillisporus</name>
    <dbReference type="NCBI Taxonomy" id="367775"/>
    <lineage>
        <taxon>Eukaryota</taxon>
        <taxon>Fungi</taxon>
        <taxon>Dikarya</taxon>
        <taxon>Basidiomycota</taxon>
        <taxon>Agaricomycotina</taxon>
        <taxon>Tremellomycetes</taxon>
        <taxon>Tremellales</taxon>
        <taxon>Cryptococcaceae</taxon>
        <taxon>Cryptococcus</taxon>
        <taxon>Cryptococcus gattii species complex</taxon>
    </lineage>
</organism>
<feature type="chain" id="PRO_0000410372" description="High osmolarity signaling protein SHO1">
    <location>
        <begin position="1"/>
        <end position="296"/>
    </location>
</feature>
<feature type="topological domain" description="Cytoplasmic" evidence="2">
    <location>
        <begin position="1"/>
        <end position="14"/>
    </location>
</feature>
<feature type="transmembrane region" description="Helical" evidence="2">
    <location>
        <begin position="15"/>
        <end position="35"/>
    </location>
</feature>
<feature type="topological domain" description="Extracellular" evidence="2">
    <location>
        <begin position="36"/>
        <end position="51"/>
    </location>
</feature>
<feature type="transmembrane region" description="Helical" evidence="2">
    <location>
        <begin position="52"/>
        <end position="72"/>
    </location>
</feature>
<feature type="topological domain" description="Cytoplasmic" evidence="2">
    <location>
        <begin position="73"/>
        <end position="81"/>
    </location>
</feature>
<feature type="transmembrane region" description="Helical" evidence="2">
    <location>
        <begin position="82"/>
        <end position="102"/>
    </location>
</feature>
<feature type="topological domain" description="Extracellular" evidence="2">
    <location>
        <begin position="103"/>
        <end position="109"/>
    </location>
</feature>
<feature type="transmembrane region" description="Helical" evidence="2">
    <location>
        <begin position="110"/>
        <end position="130"/>
    </location>
</feature>
<feature type="topological domain" description="Cytoplasmic" evidence="2">
    <location>
        <begin position="131"/>
        <end position="296"/>
    </location>
</feature>
<feature type="domain" description="SH3" evidence="3">
    <location>
        <begin position="237"/>
        <end position="296"/>
    </location>
</feature>
<feature type="region of interest" description="Disordered" evidence="4">
    <location>
        <begin position="153"/>
        <end position="176"/>
    </location>
</feature>
<sequence>MFGGHSFDVGYVMRHPVFLVTFIIAIPSWIIAFAGQCAAEAKYSSSNGRTPVAGTLWFNIWLQLMLTVSLAISSDDLALHRFQLSIFLAIATALAVGGVEFIFQTPGAYIAIGVGWLLLTMVNLVWIVYLTSEEDTFLYNVLNSGGNGGLSSHNRRIGTSVQRRDETPGYGGGEMGLGNSMGGMPRGISSNTINSGGYGGGYAPASMEGTPQKVTSVTRNEYGHTGVQSPGIDESVPRPQRAKALYAYSASPDDPNEVSFMKGEILEVVDATGKWFQVRTPAGVTGIAPSNYLVLL</sequence>
<gene>
    <name type="primary">SHO1</name>
    <name type="ordered locus">CGB_L1550C</name>
</gene>
<accession>E6RET3</accession>